<proteinExistence type="inferred from homology"/>
<keyword id="KW-0058">Aromatic hydrocarbons catabolism</keyword>
<keyword id="KW-0456">Lyase</keyword>
<keyword id="KW-0479">Metal-binding</keyword>
<organism>
    <name type="scientific">Escherichia coli (strain SE11)</name>
    <dbReference type="NCBI Taxonomy" id="409438"/>
    <lineage>
        <taxon>Bacteria</taxon>
        <taxon>Pseudomonadati</taxon>
        <taxon>Pseudomonadota</taxon>
        <taxon>Gammaproteobacteria</taxon>
        <taxon>Enterobacterales</taxon>
        <taxon>Enterobacteriaceae</taxon>
        <taxon>Escherichia</taxon>
    </lineage>
</organism>
<comment type="function">
    <text evidence="1">Catalyzes the reversible retro-aldol cleavage of 4-hydroxy-2-ketoheptane-1,7-dioate (HKHD) to pyruvate and succinic semialdehyde.</text>
</comment>
<comment type="catalytic activity">
    <reaction evidence="1">
        <text>4-hydroxy-2-oxoheptanedioate = succinate semialdehyde + pyruvate</text>
        <dbReference type="Rhea" id="RHEA:25788"/>
        <dbReference type="ChEBI" id="CHEBI:15361"/>
        <dbReference type="ChEBI" id="CHEBI:57706"/>
        <dbReference type="ChEBI" id="CHEBI:73036"/>
        <dbReference type="EC" id="4.1.2.52"/>
    </reaction>
</comment>
<comment type="cofactor">
    <cofactor evidence="1">
        <name>a divalent metal cation</name>
        <dbReference type="ChEBI" id="CHEBI:60240"/>
    </cofactor>
    <text evidence="1">Binds 1 divalent metal cation per subunit.</text>
</comment>
<comment type="pathway">
    <text evidence="1">Aromatic compound metabolism; 4-hydroxyphenylacetate degradation; pyruvate and succinate semialdehyde from 4-hydroxyphenylacetate: step 7/7.</text>
</comment>
<comment type="subunit">
    <text evidence="1">Homohexamer; trimer of dimers.</text>
</comment>
<comment type="similarity">
    <text evidence="1">Belongs to the HpcH/HpaI aldolase family.</text>
</comment>
<name>HPCH_ECOSE</name>
<reference key="1">
    <citation type="journal article" date="2008" name="DNA Res.">
        <title>Complete genome sequence and comparative analysis of the wild-type commensal Escherichia coli strain SE11 isolated from a healthy adult.</title>
        <authorList>
            <person name="Oshima K."/>
            <person name="Toh H."/>
            <person name="Ogura Y."/>
            <person name="Sasamoto H."/>
            <person name="Morita H."/>
            <person name="Park S.-H."/>
            <person name="Ooka T."/>
            <person name="Iyoda S."/>
            <person name="Taylor T.D."/>
            <person name="Hayashi T."/>
            <person name="Itoh K."/>
            <person name="Hattori M."/>
        </authorList>
    </citation>
    <scope>NUCLEOTIDE SEQUENCE [LARGE SCALE GENOMIC DNA]</scope>
    <source>
        <strain>SE11</strain>
    </source>
</reference>
<sequence>MENSFKAALKAGRPQIGLWLGLSSSYSAELLAGAGFDWLLIDGEHAPNNVQTVLTQLQAIAPYPSQPVVRPSWNDPVQIKQLLDVGTQTLLVPMVQNADEAREAVRATRYPPAGIRGVGSALARASRWNRIPDYLQKANDQMCVLVQIETREAMKNLPQILDVEGVDGVFIGPADLSADMGYAGNPQHPEVQAAIEQAIVQIRESGKAPGILIANEQLAKRYLELGALFVAVGVDTTLLARAAEALAARFGAQATAVKPGVY</sequence>
<gene>
    <name evidence="1" type="primary">hpcH</name>
    <name evidence="1" type="synonym">hpaI</name>
    <name type="ordered locus">ECSE_4624</name>
</gene>
<protein>
    <recommendedName>
        <fullName evidence="1">4-hydroxy-2-oxo-heptane-1,7-dioate aldolase</fullName>
        <ecNumber evidence="1">4.1.2.52</ecNumber>
    </recommendedName>
    <alternativeName>
        <fullName evidence="1">2,4-dihydroxyhept-2-ene-1,7-dioic acid aldolase</fullName>
        <shortName evidence="1">HHED aldolase</shortName>
    </alternativeName>
    <alternativeName>
        <fullName evidence="1">4-hydroxy-2-ketoheptane-1,7-dioate aldolase</fullName>
        <shortName evidence="1">HKHD aldolase</shortName>
    </alternativeName>
</protein>
<feature type="chain" id="PRO_1000140418" description="4-hydroxy-2-oxo-heptane-1,7-dioate aldolase">
    <location>
        <begin position="1"/>
        <end position="262"/>
    </location>
</feature>
<feature type="active site" description="Proton acceptor" evidence="1">
    <location>
        <position position="45"/>
    </location>
</feature>
<feature type="binding site" evidence="1">
    <location>
        <position position="147"/>
    </location>
    <ligand>
        <name>substrate</name>
    </ligand>
</feature>
<feature type="binding site" evidence="1">
    <location>
        <position position="149"/>
    </location>
    <ligand>
        <name>a divalent metal cation</name>
        <dbReference type="ChEBI" id="CHEBI:60240"/>
    </ligand>
</feature>
<feature type="binding site" evidence="1">
    <location>
        <position position="174"/>
    </location>
    <ligand>
        <name>substrate</name>
    </ligand>
</feature>
<feature type="binding site" evidence="1">
    <location>
        <position position="175"/>
    </location>
    <ligand>
        <name>a divalent metal cation</name>
        <dbReference type="ChEBI" id="CHEBI:60240"/>
    </ligand>
</feature>
<feature type="binding site" evidence="1">
    <location>
        <position position="175"/>
    </location>
    <ligand>
        <name>substrate</name>
    </ligand>
</feature>
<feature type="site" description="Transition state stabilizer" evidence="1">
    <location>
        <position position="70"/>
    </location>
</feature>
<feature type="site" description="Increases basicity of active site His" evidence="1">
    <location>
        <position position="84"/>
    </location>
</feature>
<accession>B6I2N1</accession>
<evidence type="ECO:0000255" key="1">
    <source>
        <dbReference type="HAMAP-Rule" id="MF_01292"/>
    </source>
</evidence>
<dbReference type="EC" id="4.1.2.52" evidence="1"/>
<dbReference type="EMBL" id="AP009240">
    <property type="protein sequence ID" value="BAG80148.1"/>
    <property type="molecule type" value="Genomic_DNA"/>
</dbReference>
<dbReference type="RefSeq" id="WP_000431706.1">
    <property type="nucleotide sequence ID" value="NC_011415.1"/>
</dbReference>
<dbReference type="SMR" id="B6I2N1"/>
<dbReference type="GeneID" id="75202969"/>
<dbReference type="KEGG" id="ecy:ECSE_4624"/>
<dbReference type="HOGENOM" id="CLU_059964_1_0_6"/>
<dbReference type="UniPathway" id="UPA00208">
    <property type="reaction ID" value="UER00422"/>
</dbReference>
<dbReference type="Proteomes" id="UP000008199">
    <property type="component" value="Chromosome"/>
</dbReference>
<dbReference type="GO" id="GO:0005737">
    <property type="term" value="C:cytoplasm"/>
    <property type="evidence" value="ECO:0007669"/>
    <property type="project" value="TreeGrafter"/>
</dbReference>
<dbReference type="GO" id="GO:0043863">
    <property type="term" value="F:4-hydroxy-2-ketopimelate aldolase activity"/>
    <property type="evidence" value="ECO:0007669"/>
    <property type="project" value="RHEA"/>
</dbReference>
<dbReference type="GO" id="GO:0046872">
    <property type="term" value="F:metal ion binding"/>
    <property type="evidence" value="ECO:0007669"/>
    <property type="project" value="UniProtKB-UniRule"/>
</dbReference>
<dbReference type="GO" id="GO:1901023">
    <property type="term" value="P:4-hydroxyphenylacetate catabolic process"/>
    <property type="evidence" value="ECO:0007669"/>
    <property type="project" value="UniProtKB-UniRule"/>
</dbReference>
<dbReference type="GO" id="GO:0010124">
    <property type="term" value="P:phenylacetate catabolic process"/>
    <property type="evidence" value="ECO:0007669"/>
    <property type="project" value="InterPro"/>
</dbReference>
<dbReference type="FunFam" id="3.20.20.60:FF:000004">
    <property type="entry name" value="5-keto-4-deoxy-D-glucarate aldolase"/>
    <property type="match status" value="1"/>
</dbReference>
<dbReference type="Gene3D" id="3.20.20.60">
    <property type="entry name" value="Phosphoenolpyruvate-binding domains"/>
    <property type="match status" value="1"/>
</dbReference>
<dbReference type="HAMAP" id="MF_01292">
    <property type="entry name" value="HKHD_aldolase"/>
    <property type="match status" value="1"/>
</dbReference>
<dbReference type="InterPro" id="IPR005000">
    <property type="entry name" value="Aldolase/citrate-lyase_domain"/>
</dbReference>
<dbReference type="InterPro" id="IPR023701">
    <property type="entry name" value="HKHD_aldolase_ent"/>
</dbReference>
<dbReference type="InterPro" id="IPR012689">
    <property type="entry name" value="HpaI"/>
</dbReference>
<dbReference type="InterPro" id="IPR050251">
    <property type="entry name" value="HpcH-HpaI_aldolase"/>
</dbReference>
<dbReference type="InterPro" id="IPR015813">
    <property type="entry name" value="Pyrv/PenolPyrv_kinase-like_dom"/>
</dbReference>
<dbReference type="InterPro" id="IPR040442">
    <property type="entry name" value="Pyrv_kinase-like_dom_sf"/>
</dbReference>
<dbReference type="NCBIfam" id="TIGR02311">
    <property type="entry name" value="HpaI"/>
    <property type="match status" value="1"/>
</dbReference>
<dbReference type="PANTHER" id="PTHR30502">
    <property type="entry name" value="2-KETO-3-DEOXY-L-RHAMNONATE ALDOLASE"/>
    <property type="match status" value="1"/>
</dbReference>
<dbReference type="PANTHER" id="PTHR30502:SF0">
    <property type="entry name" value="PHOSPHOENOLPYRUVATE CARBOXYLASE FAMILY PROTEIN"/>
    <property type="match status" value="1"/>
</dbReference>
<dbReference type="Pfam" id="PF03328">
    <property type="entry name" value="HpcH_HpaI"/>
    <property type="match status" value="1"/>
</dbReference>
<dbReference type="SUPFAM" id="SSF51621">
    <property type="entry name" value="Phosphoenolpyruvate/pyruvate domain"/>
    <property type="match status" value="1"/>
</dbReference>